<evidence type="ECO:0000255" key="1">
    <source>
        <dbReference type="HAMAP-Rule" id="MF_00530"/>
    </source>
</evidence>
<comment type="function">
    <text evidence="1">Produces ATP from ADP in the presence of a proton gradient across the membrane.</text>
</comment>
<comment type="subunit">
    <text evidence="1">F-type ATPases have 2 components, CF(1) - the catalytic core - and CF(0) - the membrane proton channel. CF(1) has five subunits: alpha(3), beta(3), gamma(1), delta(1), epsilon(1). CF(0) has three main subunits: a, b and c.</text>
</comment>
<comment type="subcellular location">
    <subcellularLocation>
        <location evidence="1">Cellular thylakoid membrane</location>
        <topology evidence="1">Peripheral membrane protein</topology>
    </subcellularLocation>
</comment>
<comment type="similarity">
    <text evidence="1">Belongs to the ATPase epsilon chain family.</text>
</comment>
<sequence length="134" mass="14537">MAISLKVLAPNKNVYQGEAEEVILPSTTGQLGILPGHISLVTAIDIGVLRLRMNSQWKSIALMGGFAEIESDEVIVLVNNAEIGSEINVQNAEQDLKEAKLAISKFSENEKNPEKIKALKEISKAEARIQAAKN</sequence>
<feature type="chain" id="PRO_1000056520" description="ATP synthase epsilon chain">
    <location>
        <begin position="1"/>
        <end position="134"/>
    </location>
</feature>
<gene>
    <name evidence="1" type="primary">atpC</name>
    <name type="ordered locus">A9601_16411</name>
</gene>
<name>ATPE_PROMS</name>
<reference key="1">
    <citation type="journal article" date="2007" name="PLoS Genet.">
        <title>Patterns and implications of gene gain and loss in the evolution of Prochlorococcus.</title>
        <authorList>
            <person name="Kettler G.C."/>
            <person name="Martiny A.C."/>
            <person name="Huang K."/>
            <person name="Zucker J."/>
            <person name="Coleman M.L."/>
            <person name="Rodrigue S."/>
            <person name="Chen F."/>
            <person name="Lapidus A."/>
            <person name="Ferriera S."/>
            <person name="Johnson J."/>
            <person name="Steglich C."/>
            <person name="Church G.M."/>
            <person name="Richardson P."/>
            <person name="Chisholm S.W."/>
        </authorList>
    </citation>
    <scope>NUCLEOTIDE SEQUENCE [LARGE SCALE GENOMIC DNA]</scope>
    <source>
        <strain>AS9601</strain>
    </source>
</reference>
<accession>A2BT13</accession>
<dbReference type="EMBL" id="CP000551">
    <property type="protein sequence ID" value="ABM70924.1"/>
    <property type="molecule type" value="Genomic_DNA"/>
</dbReference>
<dbReference type="RefSeq" id="WP_011819054.1">
    <property type="nucleotide sequence ID" value="NC_008816.1"/>
</dbReference>
<dbReference type="SMR" id="A2BT13"/>
<dbReference type="STRING" id="146891.A9601_16411"/>
<dbReference type="KEGG" id="pmb:A9601_16411"/>
<dbReference type="eggNOG" id="COG0355">
    <property type="taxonomic scope" value="Bacteria"/>
</dbReference>
<dbReference type="HOGENOM" id="CLU_084338_1_2_3"/>
<dbReference type="OrthoDB" id="9804110at2"/>
<dbReference type="Proteomes" id="UP000002590">
    <property type="component" value="Chromosome"/>
</dbReference>
<dbReference type="GO" id="GO:0031676">
    <property type="term" value="C:plasma membrane-derived thylakoid membrane"/>
    <property type="evidence" value="ECO:0007669"/>
    <property type="project" value="UniProtKB-SubCell"/>
</dbReference>
<dbReference type="GO" id="GO:0045259">
    <property type="term" value="C:proton-transporting ATP synthase complex"/>
    <property type="evidence" value="ECO:0007669"/>
    <property type="project" value="UniProtKB-KW"/>
</dbReference>
<dbReference type="GO" id="GO:0005524">
    <property type="term" value="F:ATP binding"/>
    <property type="evidence" value="ECO:0007669"/>
    <property type="project" value="UniProtKB-UniRule"/>
</dbReference>
<dbReference type="GO" id="GO:0046933">
    <property type="term" value="F:proton-transporting ATP synthase activity, rotational mechanism"/>
    <property type="evidence" value="ECO:0007669"/>
    <property type="project" value="UniProtKB-UniRule"/>
</dbReference>
<dbReference type="CDD" id="cd12152">
    <property type="entry name" value="F1-ATPase_delta"/>
    <property type="match status" value="1"/>
</dbReference>
<dbReference type="Gene3D" id="2.60.15.10">
    <property type="entry name" value="F0F1 ATP synthase delta/epsilon subunit, N-terminal"/>
    <property type="match status" value="1"/>
</dbReference>
<dbReference type="HAMAP" id="MF_00530">
    <property type="entry name" value="ATP_synth_epsil_bac"/>
    <property type="match status" value="1"/>
</dbReference>
<dbReference type="InterPro" id="IPR001469">
    <property type="entry name" value="ATP_synth_F1_dsu/esu"/>
</dbReference>
<dbReference type="InterPro" id="IPR020546">
    <property type="entry name" value="ATP_synth_F1_dsu/esu_N"/>
</dbReference>
<dbReference type="InterPro" id="IPR036771">
    <property type="entry name" value="ATPsynth_dsu/esu_N"/>
</dbReference>
<dbReference type="NCBIfam" id="TIGR01216">
    <property type="entry name" value="ATP_synt_epsi"/>
    <property type="match status" value="1"/>
</dbReference>
<dbReference type="PANTHER" id="PTHR13822">
    <property type="entry name" value="ATP SYNTHASE DELTA/EPSILON CHAIN"/>
    <property type="match status" value="1"/>
</dbReference>
<dbReference type="PANTHER" id="PTHR13822:SF10">
    <property type="entry name" value="ATP SYNTHASE EPSILON CHAIN, CHLOROPLASTIC"/>
    <property type="match status" value="1"/>
</dbReference>
<dbReference type="Pfam" id="PF02823">
    <property type="entry name" value="ATP-synt_DE_N"/>
    <property type="match status" value="1"/>
</dbReference>
<dbReference type="SUPFAM" id="SSF51344">
    <property type="entry name" value="Epsilon subunit of F1F0-ATP synthase N-terminal domain"/>
    <property type="match status" value="1"/>
</dbReference>
<organism>
    <name type="scientific">Prochlorococcus marinus (strain AS9601)</name>
    <dbReference type="NCBI Taxonomy" id="146891"/>
    <lineage>
        <taxon>Bacteria</taxon>
        <taxon>Bacillati</taxon>
        <taxon>Cyanobacteriota</taxon>
        <taxon>Cyanophyceae</taxon>
        <taxon>Synechococcales</taxon>
        <taxon>Prochlorococcaceae</taxon>
        <taxon>Prochlorococcus</taxon>
    </lineage>
</organism>
<proteinExistence type="inferred from homology"/>
<keyword id="KW-0066">ATP synthesis</keyword>
<keyword id="KW-0139">CF(1)</keyword>
<keyword id="KW-0375">Hydrogen ion transport</keyword>
<keyword id="KW-0406">Ion transport</keyword>
<keyword id="KW-0472">Membrane</keyword>
<keyword id="KW-0793">Thylakoid</keyword>
<keyword id="KW-0813">Transport</keyword>
<protein>
    <recommendedName>
        <fullName evidence="1">ATP synthase epsilon chain</fullName>
    </recommendedName>
    <alternativeName>
        <fullName evidence="1">ATP synthase F1 sector epsilon subunit</fullName>
    </alternativeName>
    <alternativeName>
        <fullName evidence="1">F-ATPase epsilon subunit</fullName>
    </alternativeName>
</protein>